<name>RHTA_SALTS</name>
<dbReference type="EMBL" id="FQ312003">
    <property type="protein sequence ID" value="CBW16905.1"/>
    <property type="molecule type" value="Genomic_DNA"/>
</dbReference>
<dbReference type="EMBL" id="U62709">
    <property type="protein sequence ID" value="AAC44602.1"/>
    <property type="molecule type" value="Genomic_DNA"/>
</dbReference>
<dbReference type="RefSeq" id="WP_001119554.1">
    <property type="nucleotide sequence ID" value="NZ_QASL01000012.1"/>
</dbReference>
<dbReference type="SMR" id="E1W9W8"/>
<dbReference type="KEGG" id="sey:SL1344_0807"/>
<dbReference type="PATRIC" id="fig|216597.6.peg.899"/>
<dbReference type="HOGENOM" id="CLU_057295_0_1_6"/>
<dbReference type="BioCyc" id="SENT216597:SL1344_RS04210-MONOMER"/>
<dbReference type="Proteomes" id="UP000008962">
    <property type="component" value="Chromosome"/>
</dbReference>
<dbReference type="GO" id="GO:0005886">
    <property type="term" value="C:plasma membrane"/>
    <property type="evidence" value="ECO:0007669"/>
    <property type="project" value="UniProtKB-SubCell"/>
</dbReference>
<dbReference type="GO" id="GO:0006865">
    <property type="term" value="P:amino acid transport"/>
    <property type="evidence" value="ECO:0007669"/>
    <property type="project" value="UniProtKB-KW"/>
</dbReference>
<dbReference type="InterPro" id="IPR050638">
    <property type="entry name" value="AA-Vitamin_Transporters"/>
</dbReference>
<dbReference type="InterPro" id="IPR000620">
    <property type="entry name" value="EamA_dom"/>
</dbReference>
<dbReference type="NCBIfam" id="NF007823">
    <property type="entry name" value="PRK10532.1"/>
    <property type="match status" value="1"/>
</dbReference>
<dbReference type="PANTHER" id="PTHR32322">
    <property type="entry name" value="INNER MEMBRANE TRANSPORTER"/>
    <property type="match status" value="1"/>
</dbReference>
<dbReference type="PANTHER" id="PTHR32322:SF18">
    <property type="entry name" value="S-ADENOSYLMETHIONINE_S-ADENOSYLHOMOCYSTEINE TRANSPORTER"/>
    <property type="match status" value="1"/>
</dbReference>
<dbReference type="Pfam" id="PF00892">
    <property type="entry name" value="EamA"/>
    <property type="match status" value="1"/>
</dbReference>
<dbReference type="SUPFAM" id="SSF103481">
    <property type="entry name" value="Multidrug resistance efflux transporter EmrE"/>
    <property type="match status" value="2"/>
</dbReference>
<feature type="chain" id="PRO_0000405415" description="Threonine/homoserine exporter RhtA">
    <location>
        <begin position="1"/>
        <end position="295"/>
    </location>
</feature>
<feature type="topological domain" description="Cytoplasmic" evidence="2">
    <location>
        <begin position="1"/>
        <end position="7"/>
    </location>
</feature>
<feature type="transmembrane region" description="Helical" evidence="2">
    <location>
        <begin position="8"/>
        <end position="28"/>
    </location>
</feature>
<feature type="topological domain" description="Periplasmic" evidence="2">
    <location>
        <begin position="29"/>
        <end position="38"/>
    </location>
</feature>
<feature type="transmembrane region" description="Helical" evidence="2">
    <location>
        <begin position="39"/>
        <end position="59"/>
    </location>
</feature>
<feature type="topological domain" description="Cytoplasmic" evidence="2">
    <location>
        <begin position="60"/>
        <end position="71"/>
    </location>
</feature>
<feature type="transmembrane region" description="Helical" evidence="2">
    <location>
        <begin position="72"/>
        <end position="92"/>
    </location>
</feature>
<feature type="topological domain" description="Periplasmic" evidence="2">
    <location>
        <position position="93"/>
    </location>
</feature>
<feature type="transmembrane region" description="Helical" evidence="2">
    <location>
        <begin position="94"/>
        <end position="114"/>
    </location>
</feature>
<feature type="topological domain" description="Cytoplasmic" evidence="2">
    <location>
        <begin position="115"/>
        <end position="118"/>
    </location>
</feature>
<feature type="transmembrane region" description="Helical" evidence="2">
    <location>
        <begin position="119"/>
        <end position="139"/>
    </location>
</feature>
<feature type="topological domain" description="Periplasmic" evidence="2">
    <location>
        <begin position="140"/>
        <end position="146"/>
    </location>
</feature>
<feature type="transmembrane region" description="Helical" evidence="2">
    <location>
        <begin position="147"/>
        <end position="167"/>
    </location>
</feature>
<feature type="topological domain" description="Cytoplasmic" evidence="2">
    <location>
        <begin position="168"/>
        <end position="175"/>
    </location>
</feature>
<feature type="transmembrane region" description="Helical" evidence="2">
    <location>
        <begin position="176"/>
        <end position="196"/>
    </location>
</feature>
<feature type="topological domain" description="Periplasmic" evidence="2">
    <location>
        <begin position="197"/>
        <end position="200"/>
    </location>
</feature>
<feature type="transmembrane region" description="Helical" evidence="2">
    <location>
        <begin position="201"/>
        <end position="221"/>
    </location>
</feature>
<feature type="topological domain" description="Cytoplasmic" evidence="2">
    <location>
        <begin position="222"/>
        <end position="237"/>
    </location>
</feature>
<feature type="transmembrane region" description="Helical" evidence="2">
    <location>
        <begin position="238"/>
        <end position="258"/>
    </location>
</feature>
<feature type="topological domain" description="Periplasmic" evidence="2">
    <location>
        <begin position="259"/>
        <end position="262"/>
    </location>
</feature>
<feature type="transmembrane region" description="Helical" evidence="2">
    <location>
        <begin position="263"/>
        <end position="283"/>
    </location>
</feature>
<feature type="topological domain" description="Cytoplasmic" evidence="2">
    <location>
        <begin position="284"/>
        <end position="295"/>
    </location>
</feature>
<feature type="domain" description="EamA 1">
    <location>
        <begin position="30"/>
        <end position="135"/>
    </location>
</feature>
<feature type="domain" description="EamA 2">
    <location>
        <begin position="159"/>
        <end position="278"/>
    </location>
</feature>
<feature type="sequence conflict" description="In Ref. 2; AAC44602." evidence="3" ref="2">
    <original>LT</original>
    <variation>IP</variation>
    <location>
        <begin position="147"/>
        <end position="148"/>
    </location>
</feature>
<feature type="sequence conflict" description="In Ref. 2; AAC44602." evidence="3" ref="2">
    <original>P</original>
    <variation>A</variation>
    <location>
        <position position="234"/>
    </location>
</feature>
<feature type="sequence conflict" description="In Ref. 2; AAC44602." evidence="3" ref="2">
    <original>T</original>
    <variation>N</variation>
    <location>
        <position position="237"/>
    </location>
</feature>
<feature type="sequence conflict" description="In Ref. 2; AAC44602." evidence="3" ref="2">
    <original>QIKQVDVK</original>
    <variation>AN</variation>
    <location>
        <begin position="288"/>
        <end position="295"/>
    </location>
</feature>
<sequence length="295" mass="31228">MPGSTRKLPVWLPILVLLIAMSSIQSGASLAKSLFPLVGAPGVTALRLALGTLILIAFFKPWRLRFAKEQRLPLLFYGLSLGGMNYLFYLSIQTVPLGIAVALEFTGPLAVALFSSRRPVDFIWVVLAVLGLWFLLPLGQDMSHVDLTGAALALGAGACWAVYILTGQRAGAEHGPATVAVGSLIAAIIFVPIGAVQAGDALWHWSILPLGLAVAVLSTALPYSLEMIALTRLPTRTFGTLMSMEPALAAVSGMIFLGETLTGIQILALCAIIAASMGSTLTIRREPQIKQVDVK</sequence>
<proteinExistence type="inferred from homology"/>
<gene>
    <name type="primary">rhtA</name>
    <name type="ordered locus">SL1344_0807</name>
</gene>
<keyword id="KW-0029">Amino-acid transport</keyword>
<keyword id="KW-0997">Cell inner membrane</keyword>
<keyword id="KW-1003">Cell membrane</keyword>
<keyword id="KW-0472">Membrane</keyword>
<keyword id="KW-0677">Repeat</keyword>
<keyword id="KW-0812">Transmembrane</keyword>
<keyword id="KW-1133">Transmembrane helix</keyword>
<keyword id="KW-0813">Transport</keyword>
<accession>E1W9W8</accession>
<accession>P74867</accession>
<comment type="function">
    <text evidence="1">Involved in the efflux of threonine and homoserine.</text>
</comment>
<comment type="subcellular location">
    <subcellularLocation>
        <location evidence="1">Cell inner membrane</location>
        <topology evidence="1">Multi-pass membrane protein</topology>
    </subcellularLocation>
</comment>
<comment type="similarity">
    <text evidence="3">Belongs to the drug/metabolite transporter (DMT) superfamily. 10 TMS drug/metabolite exporter (DME) (TC 2.A.7.3) family.</text>
</comment>
<reference key="1">
    <citation type="journal article" date="2012" name="Proc. Natl. Acad. Sci. U.S.A.">
        <title>The transcriptional landscape and small RNAs of Salmonella enterica serovar Typhimurium.</title>
        <authorList>
            <person name="Kroger C."/>
            <person name="Dillon S.C."/>
            <person name="Cameron A.D."/>
            <person name="Papenfort K."/>
            <person name="Sivasankaran S.K."/>
            <person name="Hokamp K."/>
            <person name="Chao Y."/>
            <person name="Sittka A."/>
            <person name="Hebrard M."/>
            <person name="Handler K."/>
            <person name="Colgan A."/>
            <person name="Leekitcharoenphon P."/>
            <person name="Langridge G.C."/>
            <person name="Lohan A.J."/>
            <person name="Loftus B."/>
            <person name="Lucchini S."/>
            <person name="Ussery D.W."/>
            <person name="Dorman C.J."/>
            <person name="Thomson N.R."/>
            <person name="Vogel J."/>
            <person name="Hinton J.C."/>
        </authorList>
    </citation>
    <scope>NUCLEOTIDE SEQUENCE [LARGE SCALE GENOMIC DNA]</scope>
    <source>
        <strain>SL1344</strain>
    </source>
</reference>
<reference key="2">
    <citation type="journal article" date="1996" name="Mol. Microbiol.">
        <title>Bacterial genetics by flow cytometry: rapid isolation of Salmonella typhimurium acid-inducible promoters by differential fluorescence induction.</title>
        <authorList>
            <person name="Valdivia R.H."/>
            <person name="Falkow S."/>
        </authorList>
    </citation>
    <scope>NUCLEOTIDE SEQUENCE [GENOMIC DNA] OF 147-295</scope>
    <source>
        <strain>SL1344</strain>
    </source>
</reference>
<organism>
    <name type="scientific">Salmonella typhimurium (strain SL1344)</name>
    <dbReference type="NCBI Taxonomy" id="216597"/>
    <lineage>
        <taxon>Bacteria</taxon>
        <taxon>Pseudomonadati</taxon>
        <taxon>Pseudomonadota</taxon>
        <taxon>Gammaproteobacteria</taxon>
        <taxon>Enterobacterales</taxon>
        <taxon>Enterobacteriaceae</taxon>
        <taxon>Salmonella</taxon>
    </lineage>
</organism>
<protein>
    <recommendedName>
        <fullName>Threonine/homoserine exporter RhtA</fullName>
    </recommendedName>
</protein>
<evidence type="ECO:0000250" key="1"/>
<evidence type="ECO:0000255" key="2"/>
<evidence type="ECO:0000305" key="3"/>